<name>MO25L_CAEBR</name>
<proteinExistence type="inferred from homology"/>
<organism>
    <name type="scientific">Caenorhabditis briggsae</name>
    <dbReference type="NCBI Taxonomy" id="6238"/>
    <lineage>
        <taxon>Eukaryota</taxon>
        <taxon>Metazoa</taxon>
        <taxon>Ecdysozoa</taxon>
        <taxon>Nematoda</taxon>
        <taxon>Chromadorea</taxon>
        <taxon>Rhabditida</taxon>
        <taxon>Rhabditina</taxon>
        <taxon>Rhabditomorpha</taxon>
        <taxon>Rhabditoidea</taxon>
        <taxon>Rhabditidae</taxon>
        <taxon>Peloderinae</taxon>
        <taxon>Caenorhabditis</taxon>
    </lineage>
</organism>
<reference evidence="4" key="1">
    <citation type="journal article" date="2003" name="PLoS Biol.">
        <title>The genome sequence of Caenorhabditis briggsae: a platform for comparative genomics.</title>
        <authorList>
            <person name="Stein L.D."/>
            <person name="Bao Z."/>
            <person name="Blasiar D."/>
            <person name="Blumenthal T."/>
            <person name="Brent M.R."/>
            <person name="Chen N."/>
            <person name="Chinwalla A."/>
            <person name="Clarke L."/>
            <person name="Clee C."/>
            <person name="Coghlan A."/>
            <person name="Coulson A."/>
            <person name="D'Eustachio P."/>
            <person name="Fitch D.H.A."/>
            <person name="Fulton L.A."/>
            <person name="Fulton R.E."/>
            <person name="Griffiths-Jones S."/>
            <person name="Harris T.W."/>
            <person name="Hillier L.W."/>
            <person name="Kamath R."/>
            <person name="Kuwabara P.E."/>
            <person name="Mardis E.R."/>
            <person name="Marra M.A."/>
            <person name="Miner T.L."/>
            <person name="Minx P."/>
            <person name="Mullikin J.C."/>
            <person name="Plumb R.W."/>
            <person name="Rogers J."/>
            <person name="Schein J.E."/>
            <person name="Sohrmann M."/>
            <person name="Spieth J."/>
            <person name="Stajich J.E."/>
            <person name="Wei C."/>
            <person name="Willey D."/>
            <person name="Wilson R.K."/>
            <person name="Durbin R.M."/>
            <person name="Waterston R.H."/>
        </authorList>
    </citation>
    <scope>NUCLEOTIDE SEQUENCE [LARGE SCALE GENOMIC DNA]</scope>
    <source>
        <strain>AF16</strain>
    </source>
</reference>
<accession>A8X6J7</accession>
<evidence type="ECO:0000250" key="1">
    <source>
        <dbReference type="UniProtKB" id="Q9TZM2"/>
    </source>
</evidence>
<evidence type="ECO:0000255" key="2"/>
<evidence type="ECO:0000256" key="3">
    <source>
        <dbReference type="SAM" id="MobiDB-lite"/>
    </source>
</evidence>
<evidence type="ECO:0000312" key="4">
    <source>
        <dbReference type="EMBL" id="CAP28258.1"/>
    </source>
</evidence>
<sequence length="492" mass="57358">MLCLRRRTQIANPMINAVGETAEQAVKKLEKVFEVLKDRNERFPLTEISKQIDVIWESVFSVTHATAPQKKYELAEEFLNHPGVVKNLLMVFDGVQVETKRKIRDLLIFIRTWTSNDFLADAEGSLVPNPRQARPSQKFQDVLYECRFIMLHIVHEGYAGSDSIGLYNDIIRIFAEDDACLMFMLKDKGTDSNEVKQKFEGCVWAIFDRLFNTHTYRGFHILAEIFETFEIIFSQNHEASQYFFYNNLSRFSQSFHWLIAANNFFIQTKSLRFVRDIFSNRYMAEVRRQWMADPSLIKYVFLHLQSIHKTVCLEAVGLLNIFVQNPCNAPPIHKLISINRKLLLEYCRQNAPNPKDENQALDELFDETITYLVNWNEEEPAHEPTAQDTLKMRSIKLKMRREHTLELVQNEIPLFPRNNLLPTSPRQSSFVYNRRLPRVSSSRAGIRFGETRNVKGSPRSRSQSPRPPTGPEPSPRTTSYQNVRFPPEDSSR</sequence>
<feature type="chain" id="PRO_0000394765" description="MO25-like protein 3">
    <location>
        <begin position="1"/>
        <end position="492"/>
    </location>
</feature>
<feature type="region of interest" description="Disordered" evidence="3">
    <location>
        <begin position="442"/>
        <end position="492"/>
    </location>
</feature>
<feature type="compositionally biased region" description="Pro residues" evidence="3">
    <location>
        <begin position="465"/>
        <end position="474"/>
    </location>
</feature>
<comment type="similarity">
    <text evidence="2">Belongs to the Mo25 family.</text>
</comment>
<dbReference type="EMBL" id="HE601507">
    <property type="protein sequence ID" value="CAP28258.1"/>
    <property type="molecule type" value="Genomic_DNA"/>
</dbReference>
<dbReference type="SMR" id="A8X6J7"/>
<dbReference type="FunCoup" id="A8X6J7">
    <property type="interactions" value="338"/>
</dbReference>
<dbReference type="STRING" id="6238.A8X6J7"/>
<dbReference type="EnsemblMetazoa" id="CBG08436.1">
    <property type="protein sequence ID" value="CBG08436.1"/>
    <property type="gene ID" value="WBGene00030225"/>
</dbReference>
<dbReference type="KEGG" id="cbr:CBG_08436"/>
<dbReference type="CTD" id="8582386"/>
<dbReference type="WormBase" id="CBG08436">
    <property type="protein sequence ID" value="CBP07992"/>
    <property type="gene ID" value="WBGene00030225"/>
    <property type="gene designation" value="Cbr-mop-25.3"/>
</dbReference>
<dbReference type="eggNOG" id="KOG1566">
    <property type="taxonomic scope" value="Eukaryota"/>
</dbReference>
<dbReference type="HOGENOM" id="CLU_048944_0_0_1"/>
<dbReference type="InParanoid" id="A8X6J7"/>
<dbReference type="Proteomes" id="UP000008549">
    <property type="component" value="Unassembled WGS sequence"/>
</dbReference>
<dbReference type="GO" id="GO:0043539">
    <property type="term" value="F:protein serine/threonine kinase activator activity"/>
    <property type="evidence" value="ECO:0000318"/>
    <property type="project" value="GO_Central"/>
</dbReference>
<dbReference type="GO" id="GO:0035556">
    <property type="term" value="P:intracellular signal transduction"/>
    <property type="evidence" value="ECO:0000318"/>
    <property type="project" value="GO_Central"/>
</dbReference>
<dbReference type="FunFam" id="1.25.10.10:FF:001657">
    <property type="entry name" value="MO25-like protein 3"/>
    <property type="match status" value="1"/>
</dbReference>
<dbReference type="Gene3D" id="1.25.10.10">
    <property type="entry name" value="Leucine-rich Repeat Variant"/>
    <property type="match status" value="1"/>
</dbReference>
<dbReference type="InterPro" id="IPR011989">
    <property type="entry name" value="ARM-like"/>
</dbReference>
<dbReference type="InterPro" id="IPR016024">
    <property type="entry name" value="ARM-type_fold"/>
</dbReference>
<dbReference type="InterPro" id="IPR013878">
    <property type="entry name" value="Mo25"/>
</dbReference>
<dbReference type="PANTHER" id="PTHR10182">
    <property type="entry name" value="CALCIUM-BINDING PROTEIN 39-RELATED"/>
    <property type="match status" value="1"/>
</dbReference>
<dbReference type="PANTHER" id="PTHR10182:SF32">
    <property type="entry name" value="MO25-LIKE PROTEIN 3"/>
    <property type="match status" value="1"/>
</dbReference>
<dbReference type="Pfam" id="PF08569">
    <property type="entry name" value="Mo25"/>
    <property type="match status" value="1"/>
</dbReference>
<dbReference type="SUPFAM" id="SSF48371">
    <property type="entry name" value="ARM repeat"/>
    <property type="match status" value="1"/>
</dbReference>
<protein>
    <recommendedName>
        <fullName evidence="1">MO25-like protein 3</fullName>
    </recommendedName>
</protein>
<gene>
    <name evidence="4" type="primary">mop-25.3</name>
    <name type="ORF">CBG08436</name>
</gene>
<keyword id="KW-1185">Reference proteome</keyword>